<accession>B5F9F6</accession>
<organism>
    <name type="scientific">Salmonella agona (strain SL483)</name>
    <dbReference type="NCBI Taxonomy" id="454166"/>
    <lineage>
        <taxon>Bacteria</taxon>
        <taxon>Pseudomonadati</taxon>
        <taxon>Pseudomonadota</taxon>
        <taxon>Gammaproteobacteria</taxon>
        <taxon>Enterobacterales</taxon>
        <taxon>Enterobacteriaceae</taxon>
        <taxon>Salmonella</taxon>
    </lineage>
</organism>
<evidence type="ECO:0000255" key="1">
    <source>
        <dbReference type="HAMAP-Rule" id="MF_01523"/>
    </source>
</evidence>
<comment type="function">
    <text evidence="1">Specifically methylates the guanosine in position 1516 of 16S rRNA.</text>
</comment>
<comment type="catalytic activity">
    <reaction evidence="1">
        <text>guanosine(1516) in 16S rRNA + S-adenosyl-L-methionine = N(2)-methylguanosine(1516) in 16S rRNA + S-adenosyl-L-homocysteine + H(+)</text>
        <dbReference type="Rhea" id="RHEA:43220"/>
        <dbReference type="Rhea" id="RHEA-COMP:10412"/>
        <dbReference type="Rhea" id="RHEA-COMP:10413"/>
        <dbReference type="ChEBI" id="CHEBI:15378"/>
        <dbReference type="ChEBI" id="CHEBI:57856"/>
        <dbReference type="ChEBI" id="CHEBI:59789"/>
        <dbReference type="ChEBI" id="CHEBI:74269"/>
        <dbReference type="ChEBI" id="CHEBI:74481"/>
        <dbReference type="EC" id="2.1.1.242"/>
    </reaction>
</comment>
<comment type="subcellular location">
    <subcellularLocation>
        <location evidence="1">Cytoplasm</location>
    </subcellularLocation>
</comment>
<comment type="similarity">
    <text evidence="1">Belongs to the methyltransferase superfamily. RsmJ family.</text>
</comment>
<feature type="chain" id="PRO_1000198506" description="Ribosomal RNA small subunit methyltransferase J">
    <location>
        <begin position="1"/>
        <end position="252"/>
    </location>
</feature>
<feature type="binding site" evidence="1">
    <location>
        <begin position="101"/>
        <end position="102"/>
    </location>
    <ligand>
        <name>S-adenosyl-L-methionine</name>
        <dbReference type="ChEBI" id="CHEBI:59789"/>
    </ligand>
</feature>
<feature type="binding site" evidence="1">
    <location>
        <begin position="117"/>
        <end position="118"/>
    </location>
    <ligand>
        <name>S-adenosyl-L-methionine</name>
        <dbReference type="ChEBI" id="CHEBI:59789"/>
    </ligand>
</feature>
<feature type="binding site" evidence="1">
    <location>
        <begin position="153"/>
        <end position="154"/>
    </location>
    <ligand>
        <name>S-adenosyl-L-methionine</name>
        <dbReference type="ChEBI" id="CHEBI:59789"/>
    </ligand>
</feature>
<feature type="binding site" evidence="1">
    <location>
        <position position="171"/>
    </location>
    <ligand>
        <name>S-adenosyl-L-methionine</name>
        <dbReference type="ChEBI" id="CHEBI:59789"/>
    </ligand>
</feature>
<keyword id="KW-0963">Cytoplasm</keyword>
<keyword id="KW-0489">Methyltransferase</keyword>
<keyword id="KW-0698">rRNA processing</keyword>
<keyword id="KW-0949">S-adenosyl-L-methionine</keyword>
<keyword id="KW-0808">Transferase</keyword>
<proteinExistence type="inferred from homology"/>
<name>RSMJ_SALA4</name>
<gene>
    <name evidence="1" type="primary">rsmJ</name>
    <name type="synonym">yhiQ</name>
    <name type="ordered locus">SeAg_B3796</name>
</gene>
<protein>
    <recommendedName>
        <fullName evidence="1">Ribosomal RNA small subunit methyltransferase J</fullName>
        <ecNumber evidence="1">2.1.1.242</ecNumber>
    </recommendedName>
    <alternativeName>
        <fullName evidence="1">16S rRNA m2G1516 methyltransferase</fullName>
    </alternativeName>
    <alternativeName>
        <fullName evidence="1">rRNA (guanine-N(2)-)-methyltransferase</fullName>
    </alternativeName>
</protein>
<sequence>MQICLMDETGATDGALSVLAARWGLEHDEDNPMALVLTPQHLELRKRDEPKLGGIFVDFVGGAMAHRRKFGGGRGEAVAKAVGIKGDYLPDVVDATAGLGRDAFVLASVGCRVRMLERNPVVAALLDDGLTRGYADADIGGWLQERLQLIHASSLTALTDITPRPQVVYLDPMFPHRQKSALVKKEMRVFQSLVGPDLDADGLLEPARQLATKRVVVKRPDYAPPLADVATPNAIVTKGHRFDIYAGTPLTE</sequence>
<dbReference type="EC" id="2.1.1.242" evidence="1"/>
<dbReference type="EMBL" id="CP001138">
    <property type="protein sequence ID" value="ACH50651.1"/>
    <property type="molecule type" value="Genomic_DNA"/>
</dbReference>
<dbReference type="RefSeq" id="WP_001165127.1">
    <property type="nucleotide sequence ID" value="NC_011149.1"/>
</dbReference>
<dbReference type="SMR" id="B5F9F6"/>
<dbReference type="KEGG" id="sea:SeAg_B3796"/>
<dbReference type="HOGENOM" id="CLU_076324_0_0_6"/>
<dbReference type="Proteomes" id="UP000008819">
    <property type="component" value="Chromosome"/>
</dbReference>
<dbReference type="GO" id="GO:0005737">
    <property type="term" value="C:cytoplasm"/>
    <property type="evidence" value="ECO:0007669"/>
    <property type="project" value="UniProtKB-SubCell"/>
</dbReference>
<dbReference type="GO" id="GO:0008990">
    <property type="term" value="F:rRNA (guanine-N2-)-methyltransferase activity"/>
    <property type="evidence" value="ECO:0007669"/>
    <property type="project" value="UniProtKB-UniRule"/>
</dbReference>
<dbReference type="CDD" id="cd02440">
    <property type="entry name" value="AdoMet_MTases"/>
    <property type="match status" value="1"/>
</dbReference>
<dbReference type="FunFam" id="3.40.1630.10:FF:000001">
    <property type="entry name" value="Ribosomal RNA small subunit methyltransferase J"/>
    <property type="match status" value="1"/>
</dbReference>
<dbReference type="FunFam" id="3.40.50.150:FF:000072">
    <property type="entry name" value="Ribosomal RNA small subunit methyltransferase J"/>
    <property type="match status" value="1"/>
</dbReference>
<dbReference type="Gene3D" id="3.40.50.150">
    <property type="entry name" value="Vaccinia Virus protein VP39"/>
    <property type="match status" value="1"/>
</dbReference>
<dbReference type="Gene3D" id="3.40.1630.10">
    <property type="entry name" value="YhiQ-like domain"/>
    <property type="match status" value="1"/>
</dbReference>
<dbReference type="HAMAP" id="MF_01523">
    <property type="entry name" value="16SrRNA_methyltr_J"/>
    <property type="match status" value="1"/>
</dbReference>
<dbReference type="InterPro" id="IPR007536">
    <property type="entry name" value="16SrRNA_methylTrfase_J"/>
</dbReference>
<dbReference type="InterPro" id="IPR029063">
    <property type="entry name" value="SAM-dependent_MTases_sf"/>
</dbReference>
<dbReference type="NCBIfam" id="NF008012">
    <property type="entry name" value="PRK10742.1"/>
    <property type="match status" value="1"/>
</dbReference>
<dbReference type="PANTHER" id="PTHR36112">
    <property type="entry name" value="RIBOSOMAL RNA SMALL SUBUNIT METHYLTRANSFERASE J"/>
    <property type="match status" value="1"/>
</dbReference>
<dbReference type="PANTHER" id="PTHR36112:SF1">
    <property type="entry name" value="RIBOSOMAL RNA SMALL SUBUNIT METHYLTRANSFERASE J"/>
    <property type="match status" value="1"/>
</dbReference>
<dbReference type="Pfam" id="PF04445">
    <property type="entry name" value="SAM_MT"/>
    <property type="match status" value="1"/>
</dbReference>
<dbReference type="SUPFAM" id="SSF53335">
    <property type="entry name" value="S-adenosyl-L-methionine-dependent methyltransferases"/>
    <property type="match status" value="1"/>
</dbReference>
<reference key="1">
    <citation type="journal article" date="2011" name="J. Bacteriol.">
        <title>Comparative genomics of 28 Salmonella enterica isolates: evidence for CRISPR-mediated adaptive sublineage evolution.</title>
        <authorList>
            <person name="Fricke W.F."/>
            <person name="Mammel M.K."/>
            <person name="McDermott P.F."/>
            <person name="Tartera C."/>
            <person name="White D.G."/>
            <person name="Leclerc J.E."/>
            <person name="Ravel J."/>
            <person name="Cebula T.A."/>
        </authorList>
    </citation>
    <scope>NUCLEOTIDE SEQUENCE [LARGE SCALE GENOMIC DNA]</scope>
    <source>
        <strain>SL483</strain>
    </source>
</reference>